<feature type="transit peptide" description="Chloroplast" evidence="3">
    <location>
        <begin position="1"/>
        <end position="55"/>
    </location>
</feature>
<feature type="chain" id="PRO_0000418863" description="Alpha-amylase 3, chloroplastic">
    <location>
        <begin position="56"/>
        <end position="887"/>
    </location>
</feature>
<feature type="active site" description="Nucleophile" evidence="2">
    <location>
        <position position="666"/>
    </location>
</feature>
<feature type="active site" description="Proton donor" evidence="2">
    <location>
        <position position="691"/>
    </location>
</feature>
<feature type="binding site" evidence="2">
    <location>
        <begin position="545"/>
        <end position="546"/>
    </location>
    <ligand>
        <name>substrate</name>
    </ligand>
</feature>
<feature type="binding site" evidence="2">
    <location>
        <begin position="664"/>
        <end position="669"/>
    </location>
    <ligand>
        <name>substrate</name>
    </ligand>
</feature>
<feature type="binding site" evidence="1">
    <location>
        <position position="693"/>
    </location>
    <ligand>
        <name>substrate</name>
    </ligand>
</feature>
<feature type="binding site" evidence="2">
    <location>
        <position position="695"/>
    </location>
    <ligand>
        <name>substrate</name>
    </ligand>
</feature>
<feature type="binding site" evidence="1">
    <location>
        <position position="712"/>
    </location>
    <ligand>
        <name>substrate</name>
    </ligand>
</feature>
<feature type="binding site" evidence="1">
    <location>
        <position position="754"/>
    </location>
    <ligand>
        <name>substrate</name>
    </ligand>
</feature>
<feature type="binding site" evidence="2">
    <location>
        <begin position="760"/>
        <end position="762"/>
    </location>
    <ligand>
        <name>substrate</name>
    </ligand>
</feature>
<feature type="binding site" evidence="1">
    <location>
        <position position="773"/>
    </location>
    <ligand>
        <name>substrate</name>
    </ligand>
</feature>
<feature type="binding site" evidence="1">
    <location>
        <position position="779"/>
    </location>
    <ligand>
        <name>substrate</name>
    </ligand>
</feature>
<feature type="binding site" evidence="1">
    <location>
        <position position="857"/>
    </location>
    <ligand>
        <name>substrate</name>
    </ligand>
</feature>
<feature type="binding site" evidence="1">
    <location>
        <position position="884"/>
    </location>
    <ligand>
        <name>substrate</name>
    </ligand>
</feature>
<feature type="site" description="Transition state stabilizer" evidence="1">
    <location>
        <position position="774"/>
    </location>
</feature>
<feature type="disulfide bond" evidence="10">
    <location>
        <begin position="499"/>
        <end position="587"/>
    </location>
</feature>
<feature type="mutagenesis site" description="Reduced activity under reducing conditions and no activity under oxidizing conditions." evidence="10">
    <original>C</original>
    <variation>S</variation>
    <location>
        <position position="285"/>
    </location>
</feature>
<feature type="mutagenesis site" description="Increased activity under reducing conditions, but no activity under oxidizing conditions." evidence="10">
    <original>C</original>
    <variation>S</variation>
    <location>
        <position position="363"/>
    </location>
</feature>
<feature type="mutagenesis site" description="Loss of activity under reducing or oxidizing conditions." evidence="10">
    <original>C</original>
    <variation>S</variation>
    <location>
        <position position="499"/>
    </location>
</feature>
<feature type="mutagenesis site" description="Low activity under reducing conditions, but retains activity under oxidizing conditions." evidence="10">
    <original>C</original>
    <variation>S</variation>
    <location>
        <position position="587"/>
    </location>
</feature>
<feature type="mutagenesis site" description="Reduced activity under reducing conditions and no activity under oxidizing conditions." evidence="10">
    <original>C</original>
    <variation>S</variation>
    <location>
        <position position="652"/>
    </location>
</feature>
<feature type="mutagenesis site" description="Loss of catalytic activity." evidence="10">
    <original>D</original>
    <variation>N</variation>
    <location>
        <position position="666"/>
    </location>
</feature>
<comment type="function">
    <text evidence="5 7 8 9 10 11">Possesses endoamylolytic activity in vitro, but seems not required for breakdown of transitory starch in leaves. May be involved in the determination of the final structure of glucans by shortening long linear phospho-oligosaccharides in the chloroplast stroma. Can act on both soluble and insoluble glucan substrates to release small linear and branched malto-oligosaccharides (PubMed:24089528). Works synergistically with beta-amylase toward efficient starch degradation (PubMed:24089528). Has activity against p-nitrophenyl maltoheptaoside (BPNP-G7), amylopectin and beta-limit dextrin (PubMed:24089528). Involved in stress-induced starch degradation (PubMed:27436713).</text>
</comment>
<comment type="catalytic activity">
    <reaction evidence="10">
        <text>Endohydrolysis of (1-&gt;4)-alpha-D-glucosidic linkages in polysaccharides containing three or more (1-&gt;4)-alpha-linked D-glucose units.</text>
        <dbReference type="EC" id="3.2.1.1"/>
    </reaction>
</comment>
<comment type="cofactor">
    <cofactor evidence="1">
        <name>Ca(2+)</name>
        <dbReference type="ChEBI" id="CHEBI:29108"/>
    </cofactor>
</comment>
<comment type="activity regulation">
    <text evidence="10">Redox-regulated, with the highest activity under reducing conditions. The midpoint redox potential is -329 mV. The disulfide bridge between Cys-499 and Cys-587 inhibits catalysis. Inhibited by CuCl(2) and H(2)O(2).</text>
</comment>
<comment type="biophysicochemical properties">
    <phDependence>
        <text evidence="10">Optimum pH is 7.5 with p-nitrophenyl maltoheptaoside or amylopectin as substrate.</text>
    </phDependence>
</comment>
<comment type="subcellular location">
    <subcellularLocation>
        <location evidence="5 9">Plastid</location>
        <location evidence="5 9">Chloroplast</location>
    </subcellularLocation>
</comment>
<comment type="tissue specificity">
    <text evidence="6">Expressed in developing siliques.</text>
</comment>
<comment type="induction">
    <text evidence="4 5 11">Circadian-regulation. Expression increases during the light phase and decreases during the dark phase. Up-regulated during osmotic stress and by abscisic acid (PubMed:27436713).</text>
</comment>
<comment type="domain">
    <text evidence="5">The N-terminal domain is not required for endoamylolytic activity.</text>
</comment>
<comment type="disruption phenotype">
    <text evidence="5">No visible phenotype under normal growth conditions.</text>
</comment>
<comment type="similarity">
    <text evidence="13">Belongs to the glycosyl hydrolase 13 family.</text>
</comment>
<comment type="sequence caution" evidence="13">
    <conflict type="erroneous gene model prediction">
        <sequence resource="EMBL-CDS" id="AAG52558"/>
    </conflict>
</comment>
<name>AMY3_ARATH</name>
<keyword id="KW-0119">Carbohydrate metabolism</keyword>
<keyword id="KW-0150">Chloroplast</keyword>
<keyword id="KW-1015">Disulfide bond</keyword>
<keyword id="KW-0326">Glycosidase</keyword>
<keyword id="KW-0378">Hydrolase</keyword>
<keyword id="KW-0479">Metal-binding</keyword>
<keyword id="KW-0934">Plastid</keyword>
<keyword id="KW-1185">Reference proteome</keyword>
<keyword id="KW-0809">Transit peptide</keyword>
<protein>
    <recommendedName>
        <fullName evidence="12">Alpha-amylase 3, chloroplastic</fullName>
        <shortName evidence="12">AtAMY3</shortName>
        <ecNumber evidence="10">3.2.1.1</ecNumber>
    </recommendedName>
    <alternativeName>
        <fullName>1,4-alpha-D-glucan glucanohydrolase</fullName>
    </alternativeName>
</protein>
<proteinExistence type="evidence at protein level"/>
<sequence>MSTVPIESLLHHSYLRHNSKVNRGNRSFIPISLNLRSHFTSNKLLHSIGKSVGVSSMNKSPVAIRATSSDTAVVETAQSDDVIFKEIFPVQRIEKAEGKIYVRLKEVKEKNWELSVGCSIPGKWILHWGVSYVGDTGSEWDQPPEDMRPPGSIAIKDYAIETPLKKLSEGDSFFEVAINLNLESSVAALNFVLKDEETGAWYQHKGRDFKVPLVDDVPDNGNLIGAKKGFGALGQLSNIPLKQDKSSAETDSIEERKGLQEFYEEMPISKRVADDNSVSVTARKCPETSKNIVSIETDLPGDVTVHWGVCKNGTKKWEIPSEPYPEETSLFKNKALRTRLQRKDDGNGSFGLFSLDGKLEGLCFVLKLNENTWLNYRGEDFYVPFLTSSSSPVETEAAQVSKPKRKTDKEVSASGFTKEIITEIRNLAIDISSHKNQKTNVKEVQENILQEIEKLAAEAYSIFRSTTPAFSEEGVLEAEADKPDIKISSGTGSGFEILCQGFNWESNKSGRWYLELQEKADELASLGFTVLWLPPPTESVSPEGYMPKDLYNLNSRYGTIDELKDTVKKFHKVGIKVLGDAVLNHRCAHFKNQNGVWNLFGGRLNWDDRAVVADDPHFQGRGNKSSGDNFHAAPNIDHSQDFVRKDIKEWLCWMMEEVGYDGWRLDFVRGFWGGYVKDYMDASKPYFAVGEYWDSLSYTYGEMDYNQDAHRQRIVDWINATSGAAGAFDVTTKGILHTALQKCEYWRLSDPKGKPPGVVGWWPSRAVTFIENHDTGSTQGHWRFPEGKEMQGYAYILTHPGTPAVFFDHIFSDYHSEIAALLSLRNRQKLHCRSEVNIDKSERDVYAAIIDEKVAMKIGPGHYEPPNGSQNWSVAVEGRDYKVWETS</sequence>
<dbReference type="EC" id="3.2.1.1" evidence="10"/>
<dbReference type="EMBL" id="AC010675">
    <property type="protein sequence ID" value="AAG52558.1"/>
    <property type="status" value="ALT_SEQ"/>
    <property type="molecule type" value="Genomic_DNA"/>
</dbReference>
<dbReference type="EMBL" id="CP002684">
    <property type="protein sequence ID" value="AEE34983.1"/>
    <property type="molecule type" value="Genomic_DNA"/>
</dbReference>
<dbReference type="EMBL" id="AY050398">
    <property type="protein sequence ID" value="AAK91414.1"/>
    <property type="molecule type" value="mRNA"/>
</dbReference>
<dbReference type="EMBL" id="BT000643">
    <property type="protein sequence ID" value="AAN18209.1"/>
    <property type="molecule type" value="mRNA"/>
</dbReference>
<dbReference type="PIR" id="E96720">
    <property type="entry name" value="E96720"/>
</dbReference>
<dbReference type="RefSeq" id="NP_564977.1">
    <property type="nucleotide sequence ID" value="NM_105651.5"/>
</dbReference>
<dbReference type="SASBDB" id="Q94A41"/>
<dbReference type="SMR" id="Q94A41"/>
<dbReference type="BioGRID" id="28540">
    <property type="interactions" value="3"/>
</dbReference>
<dbReference type="FunCoup" id="Q94A41">
    <property type="interactions" value="1076"/>
</dbReference>
<dbReference type="IntAct" id="Q94A41">
    <property type="interactions" value="1"/>
</dbReference>
<dbReference type="STRING" id="3702.Q94A41"/>
<dbReference type="CAZy" id="CBM45">
    <property type="family name" value="Carbohydrate-Binding Module Family 45"/>
</dbReference>
<dbReference type="CAZy" id="GH13">
    <property type="family name" value="Glycoside Hydrolase Family 13"/>
</dbReference>
<dbReference type="iPTMnet" id="Q94A41"/>
<dbReference type="MetOSite" id="Q94A41"/>
<dbReference type="PaxDb" id="3702-AT1G69830.1"/>
<dbReference type="ProMEX" id="Q94A41"/>
<dbReference type="ProteomicsDB" id="244443"/>
<dbReference type="EnsemblPlants" id="AT1G69830.1">
    <property type="protein sequence ID" value="AT1G69830.1"/>
    <property type="gene ID" value="AT1G69830"/>
</dbReference>
<dbReference type="GeneID" id="843319"/>
<dbReference type="Gramene" id="AT1G69830.1">
    <property type="protein sequence ID" value="AT1G69830.1"/>
    <property type="gene ID" value="AT1G69830"/>
</dbReference>
<dbReference type="KEGG" id="ath:AT1G69830"/>
<dbReference type="Araport" id="AT1G69830"/>
<dbReference type="TAIR" id="AT1G69830">
    <property type="gene designation" value="AMY3"/>
</dbReference>
<dbReference type="eggNOG" id="KOG0471">
    <property type="taxonomic scope" value="Eukaryota"/>
</dbReference>
<dbReference type="HOGENOM" id="CLU_018421_0_0_1"/>
<dbReference type="InParanoid" id="Q94A41"/>
<dbReference type="OMA" id="LHWGVHY"/>
<dbReference type="PhylomeDB" id="Q94A41"/>
<dbReference type="BioCyc" id="ARA:AT1G69830-MONOMER"/>
<dbReference type="PRO" id="PR:Q94A41"/>
<dbReference type="Proteomes" id="UP000006548">
    <property type="component" value="Chromosome 1"/>
</dbReference>
<dbReference type="ExpressionAtlas" id="Q94A41">
    <property type="expression patterns" value="baseline and differential"/>
</dbReference>
<dbReference type="GO" id="GO:0009507">
    <property type="term" value="C:chloroplast"/>
    <property type="evidence" value="ECO:0000314"/>
    <property type="project" value="TAIR"/>
</dbReference>
<dbReference type="GO" id="GO:0009570">
    <property type="term" value="C:chloroplast stroma"/>
    <property type="evidence" value="ECO:0007005"/>
    <property type="project" value="TAIR"/>
</dbReference>
<dbReference type="GO" id="GO:0004556">
    <property type="term" value="F:alpha-amylase activity"/>
    <property type="evidence" value="ECO:0000314"/>
    <property type="project" value="CACAO"/>
</dbReference>
<dbReference type="GO" id="GO:0005509">
    <property type="term" value="F:calcium ion binding"/>
    <property type="evidence" value="ECO:0007669"/>
    <property type="project" value="InterPro"/>
</dbReference>
<dbReference type="GO" id="GO:0005983">
    <property type="term" value="P:starch catabolic process"/>
    <property type="evidence" value="ECO:0000304"/>
    <property type="project" value="TAIR"/>
</dbReference>
<dbReference type="CDD" id="cd11314">
    <property type="entry name" value="AmyAc_arch_bac_plant_AmyA"/>
    <property type="match status" value="1"/>
</dbReference>
<dbReference type="Gene3D" id="3.20.20.80">
    <property type="entry name" value="Glycosidases"/>
    <property type="match status" value="1"/>
</dbReference>
<dbReference type="Gene3D" id="2.60.40.1180">
    <property type="entry name" value="Golgi alpha-mannosidase II"/>
    <property type="match status" value="1"/>
</dbReference>
<dbReference type="InterPro" id="IPR012850">
    <property type="entry name" value="A-amylase_bs_C"/>
</dbReference>
<dbReference type="InterPro" id="IPR006047">
    <property type="entry name" value="Glyco_hydro_13_cat_dom"/>
</dbReference>
<dbReference type="InterPro" id="IPR013780">
    <property type="entry name" value="Glyco_hydro_b"/>
</dbReference>
<dbReference type="InterPro" id="IPR017853">
    <property type="entry name" value="Glycoside_hydrolase_SF"/>
</dbReference>
<dbReference type="InterPro" id="IPR056301">
    <property type="entry name" value="GWD-like_N_Ig"/>
</dbReference>
<dbReference type="PANTHER" id="PTHR43447">
    <property type="entry name" value="ALPHA-AMYLASE"/>
    <property type="match status" value="1"/>
</dbReference>
<dbReference type="Pfam" id="PF07821">
    <property type="entry name" value="Alpha-amyl_C2"/>
    <property type="match status" value="1"/>
</dbReference>
<dbReference type="Pfam" id="PF00128">
    <property type="entry name" value="Alpha-amylase"/>
    <property type="match status" value="1"/>
</dbReference>
<dbReference type="Pfam" id="PF23166">
    <property type="entry name" value="Ig_N_CWD1"/>
    <property type="match status" value="2"/>
</dbReference>
<dbReference type="SMART" id="SM00642">
    <property type="entry name" value="Aamy"/>
    <property type="match status" value="1"/>
</dbReference>
<dbReference type="SMART" id="SM00810">
    <property type="entry name" value="Alpha-amyl_C2"/>
    <property type="match status" value="1"/>
</dbReference>
<dbReference type="SUPFAM" id="SSF51445">
    <property type="entry name" value="(Trans)glycosidases"/>
    <property type="match status" value="1"/>
</dbReference>
<dbReference type="SUPFAM" id="SSF51011">
    <property type="entry name" value="Glycosyl hydrolase domain"/>
    <property type="match status" value="1"/>
</dbReference>
<gene>
    <name evidence="12" type="primary">AMY3</name>
    <name evidence="14" type="ordered locus">At1g69830</name>
    <name evidence="15" type="ORF">T17F3.14</name>
</gene>
<reference key="1">
    <citation type="journal article" date="2000" name="Nature">
        <title>Sequence and analysis of chromosome 1 of the plant Arabidopsis thaliana.</title>
        <authorList>
            <person name="Theologis A."/>
            <person name="Ecker J.R."/>
            <person name="Palm C.J."/>
            <person name="Federspiel N.A."/>
            <person name="Kaul S."/>
            <person name="White O."/>
            <person name="Alonso J."/>
            <person name="Altafi H."/>
            <person name="Araujo R."/>
            <person name="Bowman C.L."/>
            <person name="Brooks S.Y."/>
            <person name="Buehler E."/>
            <person name="Chan A."/>
            <person name="Chao Q."/>
            <person name="Chen H."/>
            <person name="Cheuk R.F."/>
            <person name="Chin C.W."/>
            <person name="Chung M.K."/>
            <person name="Conn L."/>
            <person name="Conway A.B."/>
            <person name="Conway A.R."/>
            <person name="Creasy T.H."/>
            <person name="Dewar K."/>
            <person name="Dunn P."/>
            <person name="Etgu P."/>
            <person name="Feldblyum T.V."/>
            <person name="Feng J.-D."/>
            <person name="Fong B."/>
            <person name="Fujii C.Y."/>
            <person name="Gill J.E."/>
            <person name="Goldsmith A.D."/>
            <person name="Haas B."/>
            <person name="Hansen N.F."/>
            <person name="Hughes B."/>
            <person name="Huizar L."/>
            <person name="Hunter J.L."/>
            <person name="Jenkins J."/>
            <person name="Johnson-Hopson C."/>
            <person name="Khan S."/>
            <person name="Khaykin E."/>
            <person name="Kim C.J."/>
            <person name="Koo H.L."/>
            <person name="Kremenetskaia I."/>
            <person name="Kurtz D.B."/>
            <person name="Kwan A."/>
            <person name="Lam B."/>
            <person name="Langin-Hooper S."/>
            <person name="Lee A."/>
            <person name="Lee J.M."/>
            <person name="Lenz C.A."/>
            <person name="Li J.H."/>
            <person name="Li Y.-P."/>
            <person name="Lin X."/>
            <person name="Liu S.X."/>
            <person name="Liu Z.A."/>
            <person name="Luros J.S."/>
            <person name="Maiti R."/>
            <person name="Marziali A."/>
            <person name="Militscher J."/>
            <person name="Miranda M."/>
            <person name="Nguyen M."/>
            <person name="Nierman W.C."/>
            <person name="Osborne B.I."/>
            <person name="Pai G."/>
            <person name="Peterson J."/>
            <person name="Pham P.K."/>
            <person name="Rizzo M."/>
            <person name="Rooney T."/>
            <person name="Rowley D."/>
            <person name="Sakano H."/>
            <person name="Salzberg S.L."/>
            <person name="Schwartz J.R."/>
            <person name="Shinn P."/>
            <person name="Southwick A.M."/>
            <person name="Sun H."/>
            <person name="Tallon L.J."/>
            <person name="Tambunga G."/>
            <person name="Toriumi M.J."/>
            <person name="Town C.D."/>
            <person name="Utterback T."/>
            <person name="Van Aken S."/>
            <person name="Vaysberg M."/>
            <person name="Vysotskaia V.S."/>
            <person name="Walker M."/>
            <person name="Wu D."/>
            <person name="Yu G."/>
            <person name="Fraser C.M."/>
            <person name="Venter J.C."/>
            <person name="Davis R.W."/>
        </authorList>
    </citation>
    <scope>NUCLEOTIDE SEQUENCE [LARGE SCALE GENOMIC DNA]</scope>
    <source>
        <strain>cv. Columbia</strain>
    </source>
</reference>
<reference key="2">
    <citation type="journal article" date="2017" name="Plant J.">
        <title>Araport11: a complete reannotation of the Arabidopsis thaliana reference genome.</title>
        <authorList>
            <person name="Cheng C.Y."/>
            <person name="Krishnakumar V."/>
            <person name="Chan A.P."/>
            <person name="Thibaud-Nissen F."/>
            <person name="Schobel S."/>
            <person name="Town C.D."/>
        </authorList>
    </citation>
    <scope>GENOME REANNOTATION</scope>
    <source>
        <strain>cv. Columbia</strain>
    </source>
</reference>
<reference key="3">
    <citation type="journal article" date="2003" name="Science">
        <title>Empirical analysis of transcriptional activity in the Arabidopsis genome.</title>
        <authorList>
            <person name="Yamada K."/>
            <person name="Lim J."/>
            <person name="Dale J.M."/>
            <person name="Chen H."/>
            <person name="Shinn P."/>
            <person name="Palm C.J."/>
            <person name="Southwick A.M."/>
            <person name="Wu H.C."/>
            <person name="Kim C.J."/>
            <person name="Nguyen M."/>
            <person name="Pham P.K."/>
            <person name="Cheuk R.F."/>
            <person name="Karlin-Newmann G."/>
            <person name="Liu S.X."/>
            <person name="Lam B."/>
            <person name="Sakano H."/>
            <person name="Wu T."/>
            <person name="Yu G."/>
            <person name="Miranda M."/>
            <person name="Quach H.L."/>
            <person name="Tripp M."/>
            <person name="Chang C.H."/>
            <person name="Lee J.M."/>
            <person name="Toriumi M.J."/>
            <person name="Chan M.M."/>
            <person name="Tang C.C."/>
            <person name="Onodera C.S."/>
            <person name="Deng J.M."/>
            <person name="Akiyama K."/>
            <person name="Ansari Y."/>
            <person name="Arakawa T."/>
            <person name="Banh J."/>
            <person name="Banno F."/>
            <person name="Bowser L."/>
            <person name="Brooks S.Y."/>
            <person name="Carninci P."/>
            <person name="Chao Q."/>
            <person name="Choy N."/>
            <person name="Enju A."/>
            <person name="Goldsmith A.D."/>
            <person name="Gurjal M."/>
            <person name="Hansen N.F."/>
            <person name="Hayashizaki Y."/>
            <person name="Johnson-Hopson C."/>
            <person name="Hsuan V.W."/>
            <person name="Iida K."/>
            <person name="Karnes M."/>
            <person name="Khan S."/>
            <person name="Koesema E."/>
            <person name="Ishida J."/>
            <person name="Jiang P.X."/>
            <person name="Jones T."/>
            <person name="Kawai J."/>
            <person name="Kamiya A."/>
            <person name="Meyers C."/>
            <person name="Nakajima M."/>
            <person name="Narusaka M."/>
            <person name="Seki M."/>
            <person name="Sakurai T."/>
            <person name="Satou M."/>
            <person name="Tamse R."/>
            <person name="Vaysberg M."/>
            <person name="Wallender E.K."/>
            <person name="Wong C."/>
            <person name="Yamamura Y."/>
            <person name="Yuan S."/>
            <person name="Shinozaki K."/>
            <person name="Davis R.W."/>
            <person name="Theologis A."/>
            <person name="Ecker J.R."/>
        </authorList>
    </citation>
    <scope>NUCLEOTIDE SEQUENCE [LARGE SCALE MRNA]</scope>
    <source>
        <strain>cv. Columbia</strain>
    </source>
</reference>
<reference key="4">
    <citation type="journal article" date="2004" name="Plant Physiol.">
        <title>Diurnal changes in the transcriptome encoding enzymes of starch metabolism provide evidence for both transcriptional and posttranscriptional regulation of starch metabolism in Arabidopsis leaves.</title>
        <authorList>
            <person name="Smith S.M."/>
            <person name="Fulton D.C."/>
            <person name="Chia T."/>
            <person name="Thorneycroft D."/>
            <person name="Chapple A."/>
            <person name="Dunstan H."/>
            <person name="Hylton C."/>
            <person name="Zeeman S.C."/>
            <person name="Smith A.M."/>
        </authorList>
    </citation>
    <scope>INDUCTION</scope>
</reference>
<reference key="5">
    <citation type="journal article" date="2005" name="J. Biol. Chem.">
        <title>alpha-Amylase is not required for breakdown of transitory starch in Arabidopsis leaves.</title>
        <authorList>
            <person name="Yu T.S."/>
            <person name="Zeeman S.C."/>
            <person name="Thorneycroft D."/>
            <person name="Fulton D.C."/>
            <person name="Dunstan H."/>
            <person name="Lue W.L."/>
            <person name="Hegemann B."/>
            <person name="Tung S.Y."/>
            <person name="Umemoto T."/>
            <person name="Chapple A."/>
            <person name="Tsai D.L."/>
            <person name="Wang S.M."/>
            <person name="Smith A.M."/>
            <person name="Chen J."/>
            <person name="Smith S.M."/>
        </authorList>
    </citation>
    <scope>FUNCTION</scope>
    <scope>SUBCELLULAR LOCATION</scope>
    <scope>INDUCTION</scope>
    <scope>DOMAIN</scope>
    <scope>DISRUPTION PHENOTYPE</scope>
</reference>
<reference key="6">
    <citation type="journal article" date="2005" name="Plant Cell Physiol.">
        <title>Contribution of gibberellins to the formation of Arabidopsis seed coat through starch degradation.</title>
        <authorList>
            <person name="Kim Y.C."/>
            <person name="Nakajima M."/>
            <person name="Nakayama A."/>
            <person name="Yamaguchi I."/>
        </authorList>
    </citation>
    <scope>TISSUE SPECIFICITY</scope>
</reference>
<reference key="7">
    <citation type="journal article" date="2008" name="Plant Cell">
        <title>Starch granule biosynthesis in Arabidopsis is abolished by removal of all debranching enzymes but restored by the subsequent removal of an endoamylase.</title>
        <authorList>
            <person name="Streb S."/>
            <person name="Delatte T."/>
            <person name="Umhang M."/>
            <person name="Eicke S."/>
            <person name="Schorderet M."/>
            <person name="Reinhardt D."/>
            <person name="Zeeman S.C."/>
        </authorList>
    </citation>
    <scope>FUNCTION</scope>
</reference>
<reference key="8">
    <citation type="journal article" date="2009" name="Plant Cell">
        <title>STARCH-EXCESS4 is a laforin-like Phosphoglucan phosphatase required for starch degradation in Arabidopsis thaliana.</title>
        <authorList>
            <person name="Koetting O."/>
            <person name="Santelia D."/>
            <person name="Edner C."/>
            <person name="Eicke S."/>
            <person name="Marthaler T."/>
            <person name="Gentry M.S."/>
            <person name="Comparot-Moss S."/>
            <person name="Chen J."/>
            <person name="Smith A.M."/>
            <person name="Steup M."/>
            <person name="Ritte G."/>
            <person name="Zeeman S.C."/>
        </authorList>
    </citation>
    <scope>FUNCTION</scope>
</reference>
<reference key="9">
    <citation type="journal article" date="2011" name="FEBS J.">
        <title>Starch-binding domains in the CBM45 family--low-affinity domains from glucan, water dikinase and alpha-amylase involved in plastidial starch metabolism.</title>
        <authorList>
            <person name="Glaring M.A."/>
            <person name="Baumann M.J."/>
            <person name="Abou Hachem M."/>
            <person name="Nakai H."/>
            <person name="Nakai N."/>
            <person name="Santelia D."/>
            <person name="Sigurskjold B.W."/>
            <person name="Zeeman S.C."/>
            <person name="Blennow A."/>
            <person name="Svensson B."/>
        </authorList>
    </citation>
    <scope>FUNCTION</scope>
    <scope>SUBCELLULAR LOCATION</scope>
</reference>
<reference key="10">
    <citation type="journal article" date="2013" name="J. Biol. Chem.">
        <title>Arabidopsis thaliana AMY3 is a unique redox-regulated chloroplastic alpha-amylase.</title>
        <authorList>
            <person name="Seung D."/>
            <person name="Thalmann M."/>
            <person name="Sparla F."/>
            <person name="Abou Hachem M."/>
            <person name="Lee S.K."/>
            <person name="Issakidis-Bourguet E."/>
            <person name="Svensson B."/>
            <person name="Zeeman S.C."/>
            <person name="Santelia D."/>
        </authorList>
    </citation>
    <scope>FUNCTION</scope>
    <scope>MUTAGENESIS OF CYS-285; CYS-363; CYS-499; CYS-587; CYS-652 AND ASP-666</scope>
    <scope>CATALYTIC ACTIVITY</scope>
    <scope>BIOPHYSICOCHEMICAL PROPERTIES</scope>
    <scope>ACTIVITY REGULATION</scope>
</reference>
<reference key="11">
    <citation type="journal article" date="2016" name="Plant Cell">
        <title>Regulation of leaf starch degradation by abscisic acid is important for osmotic stress tolerance in plants.</title>
        <authorList>
            <person name="Thalmann M."/>
            <person name="Pazmino D."/>
            <person name="Seung D."/>
            <person name="Horrer D."/>
            <person name="Nigro A."/>
            <person name="Meier T."/>
            <person name="Koelling K."/>
            <person name="Pfeifhofer H.W."/>
            <person name="Zeeman S.C."/>
            <person name="Santelia D."/>
        </authorList>
    </citation>
    <scope>FUNCTION</scope>
    <scope>INDUCTION BY MANNITOL AND ABSCISIC ACID</scope>
</reference>
<accession>Q94A41</accession>
<accession>Q9CAR6</accession>
<evidence type="ECO:0000250" key="1">
    <source>
        <dbReference type="UniProtKB" id="P00693"/>
    </source>
</evidence>
<evidence type="ECO:0000250" key="2">
    <source>
        <dbReference type="UniProtKB" id="P04063"/>
    </source>
</evidence>
<evidence type="ECO:0000255" key="3"/>
<evidence type="ECO:0000269" key="4">
    <source>
    </source>
</evidence>
<evidence type="ECO:0000269" key="5">
    <source>
    </source>
</evidence>
<evidence type="ECO:0000269" key="6">
    <source>
    </source>
</evidence>
<evidence type="ECO:0000269" key="7">
    <source>
    </source>
</evidence>
<evidence type="ECO:0000269" key="8">
    <source>
    </source>
</evidence>
<evidence type="ECO:0000269" key="9">
    <source>
    </source>
</evidence>
<evidence type="ECO:0000269" key="10">
    <source>
    </source>
</evidence>
<evidence type="ECO:0000269" key="11">
    <source>
    </source>
</evidence>
<evidence type="ECO:0000303" key="12">
    <source>
    </source>
</evidence>
<evidence type="ECO:0000305" key="13"/>
<evidence type="ECO:0000312" key="14">
    <source>
        <dbReference type="Araport" id="AT1G69830"/>
    </source>
</evidence>
<evidence type="ECO:0000312" key="15">
    <source>
        <dbReference type="EMBL" id="AAG52558.1"/>
    </source>
</evidence>
<organism>
    <name type="scientific">Arabidopsis thaliana</name>
    <name type="common">Mouse-ear cress</name>
    <dbReference type="NCBI Taxonomy" id="3702"/>
    <lineage>
        <taxon>Eukaryota</taxon>
        <taxon>Viridiplantae</taxon>
        <taxon>Streptophyta</taxon>
        <taxon>Embryophyta</taxon>
        <taxon>Tracheophyta</taxon>
        <taxon>Spermatophyta</taxon>
        <taxon>Magnoliopsida</taxon>
        <taxon>eudicotyledons</taxon>
        <taxon>Gunneridae</taxon>
        <taxon>Pentapetalae</taxon>
        <taxon>rosids</taxon>
        <taxon>malvids</taxon>
        <taxon>Brassicales</taxon>
        <taxon>Brassicaceae</taxon>
        <taxon>Camelineae</taxon>
        <taxon>Arabidopsis</taxon>
    </lineage>
</organism>